<evidence type="ECO:0000255" key="1"/>
<evidence type="ECO:0000255" key="2">
    <source>
        <dbReference type="PROSITE-ProRule" id="PRU00276"/>
    </source>
</evidence>
<evidence type="ECO:0000255" key="3">
    <source>
        <dbReference type="PROSITE-ProRule" id="PRU00498"/>
    </source>
</evidence>
<evidence type="ECO:0000269" key="4">
    <source>
    </source>
</evidence>
<evidence type="ECO:0000305" key="5"/>
<evidence type="ECO:0000305" key="6">
    <source>
    </source>
</evidence>
<evidence type="ECO:0000312" key="7">
    <source>
        <dbReference type="EMBL" id="JAT91179.1"/>
    </source>
</evidence>
<accession>A0A1E1WVX2</accession>
<reference evidence="7" key="1">
    <citation type="journal article" date="2018" name="PLoS ONE">
        <title>Proteomic endorsed transcriptomic profiles of venom glands from Tityus obscurus and T. serrulatus scorpions.</title>
        <authorList>
            <person name="de Oliveira U.C."/>
            <person name="Nishiyama M.Y. Jr."/>
            <person name="Dos Santos M.B.V."/>
            <person name="Santos-da-Silva A.P."/>
            <person name="Chalkidis H.M."/>
            <person name="Souza-Imberg A."/>
            <person name="Candido D.M."/>
            <person name="Yamanouye N."/>
            <person name="Dorce V.A.C."/>
            <person name="Junqueira-de-Azevedo I.L.M."/>
        </authorList>
    </citation>
    <scope>NUCLEOTIDE SEQUENCE [MRNA]</scope>
    <scope>PROTEIN SEQUENCE OF 265-275</scope>
    <scope>IDENTIFICATION BY MASS SPECTROMETRY</scope>
    <scope>SUBCELLULAR LOCATION</scope>
    <source>
        <tissue>Telson</tissue>
        <tissue>Venom</tissue>
    </source>
</reference>
<dbReference type="EC" id="3.4.24.-"/>
<dbReference type="EMBL" id="GEMQ01000010">
    <property type="protein sequence ID" value="JAT91179.1"/>
    <property type="molecule type" value="Transcribed_RNA"/>
</dbReference>
<dbReference type="SMR" id="A0A1E1WVX2"/>
<dbReference type="GO" id="GO:0005576">
    <property type="term" value="C:extracellular region"/>
    <property type="evidence" value="ECO:0007669"/>
    <property type="project" value="UniProtKB-SubCell"/>
</dbReference>
<dbReference type="GO" id="GO:0046872">
    <property type="term" value="F:metal ion binding"/>
    <property type="evidence" value="ECO:0007669"/>
    <property type="project" value="UniProtKB-KW"/>
</dbReference>
<dbReference type="GO" id="GO:0004222">
    <property type="term" value="F:metalloendopeptidase activity"/>
    <property type="evidence" value="ECO:0007669"/>
    <property type="project" value="InterPro"/>
</dbReference>
<dbReference type="GO" id="GO:0090729">
    <property type="term" value="F:toxin activity"/>
    <property type="evidence" value="ECO:0007669"/>
    <property type="project" value="UniProtKB-KW"/>
</dbReference>
<dbReference type="GO" id="GO:0006509">
    <property type="term" value="P:membrane protein ectodomain proteolysis"/>
    <property type="evidence" value="ECO:0007669"/>
    <property type="project" value="TreeGrafter"/>
</dbReference>
<dbReference type="Gene3D" id="3.40.390.10">
    <property type="entry name" value="Collagenase (Catalytic Domain)"/>
    <property type="match status" value="1"/>
</dbReference>
<dbReference type="InterPro" id="IPR024079">
    <property type="entry name" value="MetalloPept_cat_dom_sf"/>
</dbReference>
<dbReference type="InterPro" id="IPR001590">
    <property type="entry name" value="Peptidase_M12B"/>
</dbReference>
<dbReference type="PANTHER" id="PTHR11905">
    <property type="entry name" value="ADAM A DISINTEGRIN AND METALLOPROTEASE DOMAIN"/>
    <property type="match status" value="1"/>
</dbReference>
<dbReference type="PANTHER" id="PTHR11905:SF159">
    <property type="entry name" value="ADAM METALLOPROTEASE"/>
    <property type="match status" value="1"/>
</dbReference>
<dbReference type="Pfam" id="PF13688">
    <property type="entry name" value="Reprolysin_5"/>
    <property type="match status" value="1"/>
</dbReference>
<dbReference type="SUPFAM" id="SSF55486">
    <property type="entry name" value="Metalloproteases ('zincins'), catalytic domain"/>
    <property type="match status" value="1"/>
</dbReference>
<dbReference type="PROSITE" id="PS50215">
    <property type="entry name" value="ADAM_MEPRO"/>
    <property type="match status" value="1"/>
</dbReference>
<dbReference type="PROSITE" id="PS00142">
    <property type="entry name" value="ZINC_PROTEASE"/>
    <property type="match status" value="1"/>
</dbReference>
<sequence length="370" mass="42166">MYLAYIFFLFATVSAIPTGRVEIVFPSVETSRSGMKTVKFRALGEDVELKLEPAGDILAQDFALYNGNQEKQQSVNVESLRRRLYRDSANGAALLIDDDEQPPSIEGIVFSKLRISPHEWKEVTEEGKRAHQVEELTSDRDSYLSDDILIPDFQREMVSFTRIDRNDKCIVIEVLLVTDRKFTERCETNEALTEYVTLLSSVTEALFRQLDSGWQLRLLGIMTFTNETEPPLFEESKHPNGAYKPVFVNKINDYFRENPTSLSKNADIIGILLTRSMRDRMDDWYSFEGLAFGNSVCSGNKACAINAYEKAEQAAYNLAHEMAHSLGIFHDGEFYRCVPEEVSEVISCPNSNYIMGYNSGDNYGKIFRMF</sequence>
<protein>
    <recommendedName>
        <fullName>Metalloproteinase</fullName>
        <ecNumber>3.4.24.-</ecNumber>
    </recommendedName>
</protein>
<name>VMP_TITOB</name>
<proteinExistence type="evidence at protein level"/>
<keyword id="KW-0903">Direct protein sequencing</keyword>
<keyword id="KW-0325">Glycoprotein</keyword>
<keyword id="KW-0378">Hydrolase</keyword>
<keyword id="KW-0479">Metal-binding</keyword>
<keyword id="KW-0482">Metalloprotease</keyword>
<keyword id="KW-0645">Protease</keyword>
<keyword id="KW-0964">Secreted</keyword>
<keyword id="KW-0732">Signal</keyword>
<keyword id="KW-0800">Toxin</keyword>
<keyword id="KW-0862">Zinc</keyword>
<comment type="function">
    <text evidence="6">Metalloprotease that may disrupt the cell matrix and the process of clotting blood or hemolymph.</text>
</comment>
<comment type="subcellular location">
    <subcellularLocation>
        <location evidence="4">Secreted</location>
    </subcellularLocation>
</comment>
<comment type="tissue specificity">
    <text evidence="6">Expressed by the venom gland.</text>
</comment>
<comment type="similarity">
    <text evidence="5">Belongs to the venom metalloproteinase (M12B) family.</text>
</comment>
<organism>
    <name type="scientific">Tityus obscurus</name>
    <name type="common">Amazonian scorpion</name>
    <name type="synonym">Tityus cambridgei</name>
    <dbReference type="NCBI Taxonomy" id="1221240"/>
    <lineage>
        <taxon>Eukaryota</taxon>
        <taxon>Metazoa</taxon>
        <taxon>Ecdysozoa</taxon>
        <taxon>Arthropoda</taxon>
        <taxon>Chelicerata</taxon>
        <taxon>Arachnida</taxon>
        <taxon>Scorpiones</taxon>
        <taxon>Buthida</taxon>
        <taxon>Buthoidea</taxon>
        <taxon>Buthidae</taxon>
        <taxon>Tityus</taxon>
    </lineage>
</organism>
<feature type="signal peptide" evidence="1">
    <location>
        <begin position="1"/>
        <end position="15"/>
    </location>
</feature>
<feature type="chain" id="PRO_5012610735" description="Metalloproteinase" evidence="1">
    <location>
        <begin position="16"/>
        <end position="370"/>
    </location>
</feature>
<feature type="domain" description="Peptidase M12B" evidence="2">
    <location>
        <begin position="170"/>
        <end position="370"/>
    </location>
</feature>
<feature type="active site" evidence="2">
    <location>
        <position position="321"/>
    </location>
</feature>
<feature type="binding site" evidence="2">
    <location>
        <position position="320"/>
    </location>
    <ligand>
        <name>Zn(2+)</name>
        <dbReference type="ChEBI" id="CHEBI:29105"/>
        <note>catalytic</note>
    </ligand>
</feature>
<feature type="binding site" evidence="2">
    <location>
        <position position="324"/>
    </location>
    <ligand>
        <name>Zn(2+)</name>
        <dbReference type="ChEBI" id="CHEBI:29105"/>
        <note>catalytic</note>
    </ligand>
</feature>
<feature type="binding site" evidence="2">
    <location>
        <position position="330"/>
    </location>
    <ligand>
        <name>Zn(2+)</name>
        <dbReference type="ChEBI" id="CHEBI:29105"/>
        <note>catalytic</note>
    </ligand>
</feature>
<feature type="glycosylation site" description="N-linked (GalNAc...) asparagine" evidence="3">
    <location>
        <position position="226"/>
    </location>
</feature>